<gene>
    <name type="primary">qoxB</name>
    <name type="ordered locus">SACOL1069</name>
</gene>
<sequence>MNFPWDQLLVKGNWMITMAQIGAPFLVIGLIAVITYFKLWKYLYKEWFTSVDHKKIGVMYLICAVLMFVRGGIDALLIRAQLTVPDNKFLESNHYNEIFSTHGVIMIIFMAMPFIFGLWNIVVPLQIGARDVAFPVLNNVSFWLFFAGMILFNLSFIIGGSPAAGWTNYAPLAGEFSPGPGVNYYLIAIQISGLGTLATGINFFVTILRCKTPTMKFMQMPMFTVTTFITTLIVILAFPPLTVALALMTTDRIFDTAFFTVAHGGMPMLWANFFWVWGHPEVYIVILPAFGIYSEIIPTFARKRLFGHQSMVWATAGIAFLSFLVWVHHFFTMGNGALINSFFSISTMLIGIPTGVKLFNWLLTLYKGRITFESPMLFSLAFIPNFLLGGVTGVMLAMASADYQYHNTYFLVAHFHYTLVTGVVFACLAGLIFWYPKMMGYKLNETLNKWCFWFFMIGFNVCFLPQFILGLDGMPRRLYTYMPSDGWFLLNLISTIGALLMAIGFLFLVVSIVYSHFKSPREATGDNWDGLGRTLEWTTASAIPPKYNFAITPDWNDYDTFVDMKEHGRHYLDNHNYKDIHMPNNTPVGFWIGIFMTIGGFFLIFETVIPALICLFGIFGTMIYRSFQIDHGYHIPAAEVAETEARLREARIKEREAVSHES</sequence>
<proteinExistence type="inferred from homology"/>
<evidence type="ECO:0000250" key="1"/>
<evidence type="ECO:0000255" key="2"/>
<evidence type="ECO:0000305" key="3"/>
<keyword id="KW-1003">Cell membrane</keyword>
<keyword id="KW-0186">Copper</keyword>
<keyword id="KW-0249">Electron transport</keyword>
<keyword id="KW-0349">Heme</keyword>
<keyword id="KW-0375">Hydrogen ion transport</keyword>
<keyword id="KW-0406">Ion transport</keyword>
<keyword id="KW-0408">Iron</keyword>
<keyword id="KW-0472">Membrane</keyword>
<keyword id="KW-0479">Metal-binding</keyword>
<keyword id="KW-0560">Oxidoreductase</keyword>
<keyword id="KW-0679">Respiratory chain</keyword>
<keyword id="KW-0812">Transmembrane</keyword>
<keyword id="KW-1133">Transmembrane helix</keyword>
<keyword id="KW-0813">Transport</keyword>
<accession>Q5HH24</accession>
<organism>
    <name type="scientific">Staphylococcus aureus (strain COL)</name>
    <dbReference type="NCBI Taxonomy" id="93062"/>
    <lineage>
        <taxon>Bacteria</taxon>
        <taxon>Bacillati</taxon>
        <taxon>Bacillota</taxon>
        <taxon>Bacilli</taxon>
        <taxon>Bacillales</taxon>
        <taxon>Staphylococcaceae</taxon>
        <taxon>Staphylococcus</taxon>
    </lineage>
</organism>
<name>QOX1_STAAC</name>
<feature type="chain" id="PRO_0000276742" description="Probable quinol oxidase subunit 1">
    <location>
        <begin position="1"/>
        <end position="662"/>
    </location>
</feature>
<feature type="transmembrane region" description="Helical" evidence="2">
    <location>
        <begin position="14"/>
        <end position="34"/>
    </location>
</feature>
<feature type="transmembrane region" description="Helical" evidence="2">
    <location>
        <begin position="58"/>
        <end position="78"/>
    </location>
</feature>
<feature type="transmembrane region" description="Helical" evidence="2">
    <location>
        <begin position="103"/>
        <end position="123"/>
    </location>
</feature>
<feature type="transmembrane region" description="Helical" evidence="2">
    <location>
        <begin position="140"/>
        <end position="160"/>
    </location>
</feature>
<feature type="transmembrane region" description="Helical" evidence="2">
    <location>
        <begin position="187"/>
        <end position="207"/>
    </location>
</feature>
<feature type="transmembrane region" description="Helical" evidence="2">
    <location>
        <begin position="228"/>
        <end position="248"/>
    </location>
</feature>
<feature type="transmembrane region" description="Helical" evidence="2">
    <location>
        <begin position="273"/>
        <end position="293"/>
    </location>
</feature>
<feature type="transmembrane region" description="Helical" evidence="2">
    <location>
        <begin position="311"/>
        <end position="331"/>
    </location>
</feature>
<feature type="transmembrane region" description="Helical" evidence="2">
    <location>
        <begin position="336"/>
        <end position="356"/>
    </location>
</feature>
<feature type="transmembrane region" description="Helical" evidence="2">
    <location>
        <begin position="376"/>
        <end position="396"/>
    </location>
</feature>
<feature type="transmembrane region" description="Helical" evidence="2">
    <location>
        <begin position="415"/>
        <end position="435"/>
    </location>
</feature>
<feature type="transmembrane region" description="Helical" evidence="2">
    <location>
        <begin position="451"/>
        <end position="471"/>
    </location>
</feature>
<feature type="transmembrane region" description="Helical" evidence="2">
    <location>
        <begin position="493"/>
        <end position="513"/>
    </location>
</feature>
<feature type="transmembrane region" description="Helical" evidence="2">
    <location>
        <begin position="587"/>
        <end position="604"/>
    </location>
</feature>
<feature type="transmembrane region" description="Helical" evidence="2">
    <location>
        <begin position="608"/>
        <end position="627"/>
    </location>
</feature>
<feature type="binding site" description="axial binding residue" evidence="1">
    <location>
        <position position="102"/>
    </location>
    <ligand>
        <name>Fe(II)-heme a</name>
        <dbReference type="ChEBI" id="CHEBI:61715"/>
    </ligand>
    <ligandPart>
        <name>Fe</name>
        <dbReference type="ChEBI" id="CHEBI:18248"/>
    </ligandPart>
</feature>
<feature type="binding site" evidence="1">
    <location>
        <position position="279"/>
    </location>
    <ligand>
        <name>Cu cation</name>
        <dbReference type="ChEBI" id="CHEBI:23378"/>
        <label>B</label>
    </ligand>
</feature>
<feature type="binding site" evidence="1">
    <location>
        <position position="283"/>
    </location>
    <ligand>
        <name>Cu cation</name>
        <dbReference type="ChEBI" id="CHEBI:23378"/>
        <label>B</label>
    </ligand>
</feature>
<feature type="binding site" evidence="1">
    <location>
        <position position="328"/>
    </location>
    <ligand>
        <name>Cu cation</name>
        <dbReference type="ChEBI" id="CHEBI:23378"/>
        <label>B</label>
    </ligand>
</feature>
<feature type="binding site" evidence="1">
    <location>
        <position position="329"/>
    </location>
    <ligand>
        <name>Cu cation</name>
        <dbReference type="ChEBI" id="CHEBI:23378"/>
        <label>B</label>
    </ligand>
</feature>
<feature type="binding site" description="axial binding residue" evidence="1">
    <location>
        <position position="414"/>
    </location>
    <ligand>
        <name>heme a3</name>
        <dbReference type="ChEBI" id="CHEBI:83282"/>
    </ligand>
    <ligandPart>
        <name>Fe</name>
        <dbReference type="ChEBI" id="CHEBI:18248"/>
    </ligandPart>
</feature>
<feature type="binding site" description="axial binding residue" evidence="1">
    <location>
        <position position="416"/>
    </location>
    <ligand>
        <name>Fe(II)-heme a</name>
        <dbReference type="ChEBI" id="CHEBI:61715"/>
    </ligand>
    <ligandPart>
        <name>Fe</name>
        <dbReference type="ChEBI" id="CHEBI:18248"/>
    </ligandPart>
</feature>
<feature type="cross-link" description="1'-histidyl-3'-tyrosine (His-Tyr)" evidence="1">
    <location>
        <begin position="279"/>
        <end position="283"/>
    </location>
</feature>
<protein>
    <recommendedName>
        <fullName>Probable quinol oxidase subunit 1</fullName>
        <ecNumber>1.10.3.-</ecNumber>
    </recommendedName>
    <alternativeName>
        <fullName>Quinol oxidase polypeptide I</fullName>
    </alternativeName>
</protein>
<comment type="function">
    <text evidence="1">Catalyzes quinol oxidation with the concomitant reduction of oxygen to water.</text>
</comment>
<comment type="catalytic activity">
    <reaction>
        <text>2 a quinol + O2 = 2 a quinone + 2 H2O</text>
        <dbReference type="Rhea" id="RHEA:55376"/>
        <dbReference type="ChEBI" id="CHEBI:15377"/>
        <dbReference type="ChEBI" id="CHEBI:15379"/>
        <dbReference type="ChEBI" id="CHEBI:24646"/>
        <dbReference type="ChEBI" id="CHEBI:132124"/>
    </reaction>
</comment>
<comment type="cofactor">
    <cofactor evidence="1">
        <name>Cu cation</name>
        <dbReference type="ChEBI" id="CHEBI:23378"/>
    </cofactor>
    <text evidence="1">Binds a copper B center.</text>
</comment>
<comment type="cofactor">
    <cofactor evidence="1">
        <name>ferriheme a</name>
        <dbReference type="ChEBI" id="CHEBI:60532"/>
    </cofactor>
</comment>
<comment type="cofactor">
    <text evidence="1">Heme A3.</text>
</comment>
<comment type="pathway">
    <text>Energy metabolism; oxidative phosphorylation.</text>
</comment>
<comment type="subcellular location">
    <subcellularLocation>
        <location evidence="1">Cell membrane</location>
        <topology evidence="1">Multi-pass membrane protein</topology>
    </subcellularLocation>
</comment>
<comment type="similarity">
    <text evidence="3">Belongs to the heme-copper respiratory oxidase family.</text>
</comment>
<reference key="1">
    <citation type="journal article" date="2005" name="J. Bacteriol.">
        <title>Insights on evolution of virulence and resistance from the complete genome analysis of an early methicillin-resistant Staphylococcus aureus strain and a biofilm-producing methicillin-resistant Staphylococcus epidermidis strain.</title>
        <authorList>
            <person name="Gill S.R."/>
            <person name="Fouts D.E."/>
            <person name="Archer G.L."/>
            <person name="Mongodin E.F."/>
            <person name="DeBoy R.T."/>
            <person name="Ravel J."/>
            <person name="Paulsen I.T."/>
            <person name="Kolonay J.F."/>
            <person name="Brinkac L.M."/>
            <person name="Beanan M.J."/>
            <person name="Dodson R.J."/>
            <person name="Daugherty S.C."/>
            <person name="Madupu R."/>
            <person name="Angiuoli S.V."/>
            <person name="Durkin A.S."/>
            <person name="Haft D.H."/>
            <person name="Vamathevan J.J."/>
            <person name="Khouri H."/>
            <person name="Utterback T.R."/>
            <person name="Lee C."/>
            <person name="Dimitrov G."/>
            <person name="Jiang L."/>
            <person name="Qin H."/>
            <person name="Weidman J."/>
            <person name="Tran K."/>
            <person name="Kang K.H."/>
            <person name="Hance I.R."/>
            <person name="Nelson K.E."/>
            <person name="Fraser C.M."/>
        </authorList>
    </citation>
    <scope>NUCLEOTIDE SEQUENCE [LARGE SCALE GENOMIC DNA]</scope>
    <source>
        <strain>COL</strain>
    </source>
</reference>
<dbReference type="EC" id="1.10.3.-"/>
<dbReference type="EMBL" id="CP000046">
    <property type="protein sequence ID" value="AAW36533.1"/>
    <property type="molecule type" value="Genomic_DNA"/>
</dbReference>
<dbReference type="RefSeq" id="WP_001010768.1">
    <property type="nucleotide sequence ID" value="NC_002951.2"/>
</dbReference>
<dbReference type="SMR" id="Q5HH24"/>
<dbReference type="KEGG" id="sac:SACOL1069"/>
<dbReference type="HOGENOM" id="CLU_011899_7_1_9"/>
<dbReference type="UniPathway" id="UPA00705"/>
<dbReference type="Proteomes" id="UP000000530">
    <property type="component" value="Chromosome"/>
</dbReference>
<dbReference type="GO" id="GO:0005886">
    <property type="term" value="C:plasma membrane"/>
    <property type="evidence" value="ECO:0007669"/>
    <property type="project" value="UniProtKB-SubCell"/>
</dbReference>
<dbReference type="GO" id="GO:0005507">
    <property type="term" value="F:copper ion binding"/>
    <property type="evidence" value="ECO:0007669"/>
    <property type="project" value="InterPro"/>
</dbReference>
<dbReference type="GO" id="GO:0004129">
    <property type="term" value="F:cytochrome-c oxidase activity"/>
    <property type="evidence" value="ECO:0007669"/>
    <property type="project" value="InterPro"/>
</dbReference>
<dbReference type="GO" id="GO:0020037">
    <property type="term" value="F:heme binding"/>
    <property type="evidence" value="ECO:0007669"/>
    <property type="project" value="InterPro"/>
</dbReference>
<dbReference type="GO" id="GO:0016682">
    <property type="term" value="F:oxidoreductase activity, acting on diphenols and related substances as donors, oxygen as acceptor"/>
    <property type="evidence" value="ECO:0007669"/>
    <property type="project" value="InterPro"/>
</dbReference>
<dbReference type="GO" id="GO:0015990">
    <property type="term" value="P:electron transport coupled proton transport"/>
    <property type="evidence" value="ECO:0007669"/>
    <property type="project" value="TreeGrafter"/>
</dbReference>
<dbReference type="GO" id="GO:0006119">
    <property type="term" value="P:oxidative phosphorylation"/>
    <property type="evidence" value="ECO:0007669"/>
    <property type="project" value="UniProtKB-UniPathway"/>
</dbReference>
<dbReference type="GO" id="GO:0022904">
    <property type="term" value="P:respiratory electron transport chain"/>
    <property type="evidence" value="ECO:0007669"/>
    <property type="project" value="TreeGrafter"/>
</dbReference>
<dbReference type="CDD" id="cd01662">
    <property type="entry name" value="Ubiquinol_Oxidase_I"/>
    <property type="match status" value="1"/>
</dbReference>
<dbReference type="FunFam" id="1.20.210.10:FF:000002">
    <property type="entry name" value="Cytochrome o ubiquinol oxidase, subunit I"/>
    <property type="match status" value="1"/>
</dbReference>
<dbReference type="Gene3D" id="1.20.210.10">
    <property type="entry name" value="Cytochrome c oxidase-like, subunit I domain"/>
    <property type="match status" value="1"/>
</dbReference>
<dbReference type="InterPro" id="IPR023616">
    <property type="entry name" value="Cyt_c_oxase-like_su1_dom"/>
</dbReference>
<dbReference type="InterPro" id="IPR036927">
    <property type="entry name" value="Cyt_c_oxase-like_su1_sf"/>
</dbReference>
<dbReference type="InterPro" id="IPR000883">
    <property type="entry name" value="Cyt_C_Oxase_1"/>
</dbReference>
<dbReference type="InterPro" id="IPR023615">
    <property type="entry name" value="Cyt_c_Oxase_su1_BS"/>
</dbReference>
<dbReference type="InterPro" id="IPR014233">
    <property type="entry name" value="QoxB"/>
</dbReference>
<dbReference type="NCBIfam" id="TIGR02882">
    <property type="entry name" value="QoxB"/>
    <property type="match status" value="1"/>
</dbReference>
<dbReference type="PANTHER" id="PTHR10422:SF35">
    <property type="entry name" value="CYTOCHROME BO(3) UBIQUINOL OXIDASE SUBUNIT 1"/>
    <property type="match status" value="1"/>
</dbReference>
<dbReference type="PANTHER" id="PTHR10422">
    <property type="entry name" value="CYTOCHROME C OXIDASE SUBUNIT 1"/>
    <property type="match status" value="1"/>
</dbReference>
<dbReference type="Pfam" id="PF00115">
    <property type="entry name" value="COX1"/>
    <property type="match status" value="1"/>
</dbReference>
<dbReference type="PRINTS" id="PR01165">
    <property type="entry name" value="CYCOXIDASEI"/>
</dbReference>
<dbReference type="SUPFAM" id="SSF81442">
    <property type="entry name" value="Cytochrome c oxidase subunit I-like"/>
    <property type="match status" value="1"/>
</dbReference>
<dbReference type="PROSITE" id="PS50855">
    <property type="entry name" value="COX1"/>
    <property type="match status" value="1"/>
</dbReference>
<dbReference type="PROSITE" id="PS00077">
    <property type="entry name" value="COX1_CUB"/>
    <property type="match status" value="1"/>
</dbReference>